<feature type="chain" id="PRO_0000344320" description="Small ribosomal subunit protein uS7cz/uS7cy">
    <location>
        <begin position="1"/>
        <end position="155"/>
    </location>
</feature>
<reference key="1">
    <citation type="journal article" date="2005" name="Mol. Biol. Evol.">
        <title>Identifying the basal angiosperm node in chloroplast genome phylogenies: sampling one's way out of the Felsenstein zone.</title>
        <authorList>
            <person name="Leebens-Mack J."/>
            <person name="Raubeson L.A."/>
            <person name="Cui L."/>
            <person name="Kuehl J.V."/>
            <person name="Fourcade M.H."/>
            <person name="Chumley T.W."/>
            <person name="Boore J.L."/>
            <person name="Jansen R.K."/>
            <person name="dePamphilis C.W."/>
        </authorList>
    </citation>
    <scope>NUCLEOTIDE SEQUENCE [GENOMIC DNA]</scope>
</reference>
<reference key="2">
    <citation type="submission" date="2007-11" db="EMBL/GenBank/DDBJ databases">
        <title>The complete chloroplast genome of Acorus americanus.</title>
        <authorList>
            <person name="Peery R.M."/>
            <person name="Chumley T.W."/>
            <person name="Kuehl J.V."/>
            <person name="Boore J.L."/>
            <person name="Raubeson L.A."/>
        </authorList>
    </citation>
    <scope>NUCLEOTIDE SEQUENCE [LARGE SCALE GENOMIC DNA]</scope>
</reference>
<protein>
    <recommendedName>
        <fullName evidence="2">Small ribosomal subunit protein uS7cz/uS7cy</fullName>
    </recommendedName>
    <alternativeName>
        <fullName>30S ribosomal protein S7, chloroplastic</fullName>
    </alternativeName>
</protein>
<proteinExistence type="inferred from homology"/>
<dbReference type="EMBL" id="DQ069445">
    <property type="protein sequence ID" value="AAZ03883.1"/>
    <property type="molecule type" value="Genomic_DNA"/>
</dbReference>
<dbReference type="EMBL" id="EU273602">
    <property type="protein sequence ID" value="ABX38789.1"/>
    <property type="molecule type" value="Genomic_DNA"/>
</dbReference>
<dbReference type="EMBL" id="EU273602">
    <property type="protein sequence ID" value="ABX38802.1"/>
    <property type="molecule type" value="Genomic_DNA"/>
</dbReference>
<dbReference type="SMR" id="A9LYE6"/>
<dbReference type="GO" id="GO:0009507">
    <property type="term" value="C:chloroplast"/>
    <property type="evidence" value="ECO:0007669"/>
    <property type="project" value="UniProtKB-SubCell"/>
</dbReference>
<dbReference type="GO" id="GO:0015935">
    <property type="term" value="C:small ribosomal subunit"/>
    <property type="evidence" value="ECO:0007669"/>
    <property type="project" value="InterPro"/>
</dbReference>
<dbReference type="GO" id="GO:0019843">
    <property type="term" value="F:rRNA binding"/>
    <property type="evidence" value="ECO:0007669"/>
    <property type="project" value="UniProtKB-UniRule"/>
</dbReference>
<dbReference type="GO" id="GO:0003735">
    <property type="term" value="F:structural constituent of ribosome"/>
    <property type="evidence" value="ECO:0007669"/>
    <property type="project" value="InterPro"/>
</dbReference>
<dbReference type="GO" id="GO:0006412">
    <property type="term" value="P:translation"/>
    <property type="evidence" value="ECO:0007669"/>
    <property type="project" value="UniProtKB-UniRule"/>
</dbReference>
<dbReference type="CDD" id="cd14871">
    <property type="entry name" value="uS7_Chloroplast"/>
    <property type="match status" value="1"/>
</dbReference>
<dbReference type="FunFam" id="1.10.455.10:FF:000001">
    <property type="entry name" value="30S ribosomal protein S7"/>
    <property type="match status" value="1"/>
</dbReference>
<dbReference type="Gene3D" id="1.10.455.10">
    <property type="entry name" value="Ribosomal protein S7 domain"/>
    <property type="match status" value="1"/>
</dbReference>
<dbReference type="HAMAP" id="MF_00480_B">
    <property type="entry name" value="Ribosomal_uS7_B"/>
    <property type="match status" value="1"/>
</dbReference>
<dbReference type="InterPro" id="IPR000235">
    <property type="entry name" value="Ribosomal_uS7"/>
</dbReference>
<dbReference type="InterPro" id="IPR005717">
    <property type="entry name" value="Ribosomal_uS7_bac/org-type"/>
</dbReference>
<dbReference type="InterPro" id="IPR020606">
    <property type="entry name" value="Ribosomal_uS7_CS"/>
</dbReference>
<dbReference type="InterPro" id="IPR023798">
    <property type="entry name" value="Ribosomal_uS7_dom"/>
</dbReference>
<dbReference type="InterPro" id="IPR036823">
    <property type="entry name" value="Ribosomal_uS7_dom_sf"/>
</dbReference>
<dbReference type="NCBIfam" id="TIGR01029">
    <property type="entry name" value="rpsG_bact"/>
    <property type="match status" value="1"/>
</dbReference>
<dbReference type="PANTHER" id="PTHR11205">
    <property type="entry name" value="RIBOSOMAL PROTEIN S7"/>
    <property type="match status" value="1"/>
</dbReference>
<dbReference type="Pfam" id="PF00177">
    <property type="entry name" value="Ribosomal_S7"/>
    <property type="match status" value="1"/>
</dbReference>
<dbReference type="PIRSF" id="PIRSF002122">
    <property type="entry name" value="RPS7p_RPS7a_RPS5e_RPS7o"/>
    <property type="match status" value="1"/>
</dbReference>
<dbReference type="SUPFAM" id="SSF47973">
    <property type="entry name" value="Ribosomal protein S7"/>
    <property type="match status" value="1"/>
</dbReference>
<dbReference type="PROSITE" id="PS00052">
    <property type="entry name" value="RIBOSOMAL_S7"/>
    <property type="match status" value="1"/>
</dbReference>
<accession>A9LYE6</accession>
<accession>Q4FG86</accession>
<gene>
    <name type="primary">rps7-A</name>
</gene>
<gene>
    <name type="primary">rps7-B</name>
</gene>
<name>RR7_ACOCI</name>
<organism>
    <name type="scientific">Acorus calamus var. americanus</name>
    <name type="common">American sweet flag</name>
    <name type="synonym">Acorus americanus</name>
    <dbReference type="NCBI Taxonomy" id="263995"/>
    <lineage>
        <taxon>Eukaryota</taxon>
        <taxon>Viridiplantae</taxon>
        <taxon>Streptophyta</taxon>
        <taxon>Embryophyta</taxon>
        <taxon>Tracheophyta</taxon>
        <taxon>Spermatophyta</taxon>
        <taxon>Magnoliopsida</taxon>
        <taxon>Liliopsida</taxon>
        <taxon>Acoraceae</taxon>
        <taxon>Acorus</taxon>
    </lineage>
</organism>
<geneLocation type="chloroplast"/>
<keyword id="KW-0150">Chloroplast</keyword>
<keyword id="KW-0934">Plastid</keyword>
<keyword id="KW-0687">Ribonucleoprotein</keyword>
<keyword id="KW-0689">Ribosomal protein</keyword>
<keyword id="KW-0694">RNA-binding</keyword>
<keyword id="KW-0699">rRNA-binding</keyword>
<sequence>MSRRGTAEEKTAKSDPIYRNRLVNMLVNRILKHGKKSLAYQIIYRALKKIQQKTETNPLSVLRQAIRGVTPDIAVKSRRVGGSTHQVPIEIGSTQGKALAIRWLLAASRKRPGRNMAFKLSSELVDAAKGSGDAIRKKEETHKMAEANRAFAHFR</sequence>
<comment type="function">
    <text evidence="1">One of the primary rRNA binding proteins, it binds directly to 16S rRNA where it nucleates assembly of the head domain of the 30S subunit.</text>
</comment>
<comment type="subunit">
    <text evidence="1">Part of the 30S ribosomal subunit.</text>
</comment>
<comment type="subcellular location">
    <subcellularLocation>
        <location>Plastid</location>
        <location>Chloroplast</location>
    </subcellularLocation>
</comment>
<comment type="similarity">
    <text evidence="3">Belongs to the universal ribosomal protein uS7 family.</text>
</comment>
<evidence type="ECO:0000250" key="1"/>
<evidence type="ECO:0000255" key="2">
    <source>
        <dbReference type="HAMAP-Rule" id="MF_00480"/>
    </source>
</evidence>
<evidence type="ECO:0000305" key="3"/>